<feature type="chain" id="PRO_0000184570" description="Tektin-B1">
    <location>
        <begin position="1"/>
        <end position="400"/>
    </location>
</feature>
<feature type="coiled-coil region" evidence="1">
    <location>
        <begin position="35"/>
        <end position="81"/>
    </location>
</feature>
<feature type="coiled-coil region" evidence="1">
    <location>
        <begin position="236"/>
        <end position="294"/>
    </location>
</feature>
<feature type="coiled-coil region" evidence="1">
    <location>
        <begin position="310"/>
        <end position="353"/>
    </location>
</feature>
<feature type="sequence conflict" description="In Ref. 1; AA sequence." evidence="2" ref="1">
    <original>M</original>
    <variation>T</variation>
    <location>
        <position position="245"/>
    </location>
</feature>
<feature type="sequence conflict" description="In Ref. 1; AA sequence." evidence="2" ref="1">
    <original>Q</original>
    <variation>F</variation>
    <location>
        <position position="330"/>
    </location>
</feature>
<feature type="sequence conflict" description="In Ref. 1; AA sequence." evidence="2" ref="1">
    <original>AH</original>
    <variation>FF</variation>
    <location>
        <begin position="332"/>
        <end position="333"/>
    </location>
</feature>
<feature type="sequence conflict" description="In Ref. 1; AA sequence." evidence="2" ref="1">
    <original>A</original>
    <variation>F</variation>
    <location>
        <position position="335"/>
    </location>
</feature>
<keyword id="KW-0175">Coiled coil</keyword>
<keyword id="KW-0963">Cytoplasm</keyword>
<keyword id="KW-0206">Cytoskeleton</keyword>
<keyword id="KW-0903">Direct protein sequencing</keyword>
<keyword id="KW-0493">Microtubule</keyword>
<keyword id="KW-1185">Reference proteome</keyword>
<protein>
    <recommendedName>
        <fullName>Tektin-B1</fullName>
    </recommendedName>
</protein>
<proteinExistence type="evidence at protein level"/>
<accession>Q26648</accession>
<organism>
    <name type="scientific">Strongylocentrotus purpuratus</name>
    <name type="common">Purple sea urchin</name>
    <dbReference type="NCBI Taxonomy" id="7668"/>
    <lineage>
        <taxon>Eukaryota</taxon>
        <taxon>Metazoa</taxon>
        <taxon>Echinodermata</taxon>
        <taxon>Eleutherozoa</taxon>
        <taxon>Echinozoa</taxon>
        <taxon>Echinoidea</taxon>
        <taxon>Euechinoidea</taxon>
        <taxon>Echinacea</taxon>
        <taxon>Camarodonta</taxon>
        <taxon>Echinidea</taxon>
        <taxon>Strongylocentrotidae</taxon>
        <taxon>Strongylocentrotus</taxon>
    </lineage>
</organism>
<name>TKB1_STRPU</name>
<dbReference type="EMBL" id="L21838">
    <property type="protein sequence ID" value="AAA19672.1"/>
    <property type="molecule type" value="mRNA"/>
</dbReference>
<dbReference type="RefSeq" id="NP_999789.1">
    <property type="nucleotide sequence ID" value="NM_214624.1"/>
</dbReference>
<dbReference type="SMR" id="Q26648"/>
<dbReference type="STRING" id="7668.Q26648"/>
<dbReference type="EnsemblMetazoa" id="NM_214624">
    <property type="protein sequence ID" value="NP_999789"/>
    <property type="gene ID" value="LOC373482"/>
</dbReference>
<dbReference type="GeneID" id="373482"/>
<dbReference type="KEGG" id="spu:373482"/>
<dbReference type="CTD" id="27285"/>
<dbReference type="eggNOG" id="KOG2685">
    <property type="taxonomic scope" value="Eukaryota"/>
</dbReference>
<dbReference type="HOGENOM" id="CLU_033588_0_0_1"/>
<dbReference type="InParanoid" id="Q26648"/>
<dbReference type="OrthoDB" id="440745at2759"/>
<dbReference type="Proteomes" id="UP000007110">
    <property type="component" value="Unassembled WGS sequence"/>
</dbReference>
<dbReference type="GO" id="GO:0005929">
    <property type="term" value="C:cilium"/>
    <property type="evidence" value="ECO:0007669"/>
    <property type="project" value="UniProtKB-ARBA"/>
</dbReference>
<dbReference type="GO" id="GO:0005737">
    <property type="term" value="C:cytoplasm"/>
    <property type="evidence" value="ECO:0007669"/>
    <property type="project" value="UniProtKB-SubCell"/>
</dbReference>
<dbReference type="GO" id="GO:0005874">
    <property type="term" value="C:microtubule"/>
    <property type="evidence" value="ECO:0007669"/>
    <property type="project" value="UniProtKB-KW"/>
</dbReference>
<dbReference type="GO" id="GO:0015630">
    <property type="term" value="C:microtubule cytoskeleton"/>
    <property type="evidence" value="ECO:0000318"/>
    <property type="project" value="GO_Central"/>
</dbReference>
<dbReference type="GO" id="GO:0060271">
    <property type="term" value="P:cilium assembly"/>
    <property type="evidence" value="ECO:0000318"/>
    <property type="project" value="GO_Central"/>
</dbReference>
<dbReference type="GO" id="GO:0060294">
    <property type="term" value="P:cilium movement involved in cell motility"/>
    <property type="evidence" value="ECO:0000318"/>
    <property type="project" value="GO_Central"/>
</dbReference>
<dbReference type="InterPro" id="IPR048256">
    <property type="entry name" value="Tektin-like"/>
</dbReference>
<dbReference type="InterPro" id="IPR000435">
    <property type="entry name" value="Tektins"/>
</dbReference>
<dbReference type="PANTHER" id="PTHR19960">
    <property type="entry name" value="TEKTIN"/>
    <property type="match status" value="1"/>
</dbReference>
<dbReference type="PANTHER" id="PTHR19960:SF7">
    <property type="entry name" value="TEKTIN"/>
    <property type="match status" value="1"/>
</dbReference>
<dbReference type="Pfam" id="PF03148">
    <property type="entry name" value="Tektin"/>
    <property type="match status" value="1"/>
</dbReference>
<dbReference type="PRINTS" id="PR00511">
    <property type="entry name" value="TEKTIN"/>
</dbReference>
<sequence length="400" mass="46148">MLRNSVITPTPPAKNLASFVTKPTTDIMGYHDNTTRLSNRIDDIETWRETLEKTLADVDEEIRKLEEDKDLAERALEAKALPLDVASECKTLRDGRRDNDVVDDLANSEVGKEIDVIEGIKDALQAKVSSAFEQLCLLQEARQQLHADLRDKTEAKKIDTYCHDLTISSPDICYQPNSTRTPKGSTTPQTWEDFSRYNKDRADAEMRSSQRLREAIHSTVAQTDNDLEAQRQATEFALRKRIHEMKRAKDEDEWQKKNTEEEIAKQERNIRELEQAIKDKENPLKLAMTRLENRTYRPNVELCRDNAQYGLVNEVHEIQDSIKALEKKLQDAHNARDACEKQLYRINKDLELKNNSLDLDNKCMQVREKLTTGPVTQTMNNLSTFKTDRELYTAQRSLLA</sequence>
<evidence type="ECO:0000255" key="1"/>
<evidence type="ECO:0000305" key="2"/>
<reference key="1">
    <citation type="journal article" date="1993" name="J. Cell Sci.">
        <title>Tektin B1 from ciliary microtubules: primary structure as deduced from the cDNA sequence and comparison with tektin A1.</title>
        <authorList>
            <person name="Chen R."/>
            <person name="Perrone C.A."/>
            <person name="Amos L.A."/>
            <person name="Linck R.W."/>
        </authorList>
    </citation>
    <scope>NUCLEOTIDE SEQUENCE [MRNA]</scope>
    <scope>PROTEIN SEQUENCE OF 207-245; 289-334 AND 380-400</scope>
    <source>
        <tissue>Blastula</tissue>
    </source>
</reference>
<comment type="function">
    <text>Structural component of ciliary and flagellar microtubules.</text>
</comment>
<comment type="subunit">
    <text>May form a heterodimer with tektin a or exist as a homodimer.</text>
</comment>
<comment type="subcellular location">
    <subcellularLocation>
        <location>Cytoplasm</location>
    </subcellularLocation>
    <subcellularLocation>
        <location>Cytoplasm</location>
        <location>Cytoskeleton</location>
    </subcellularLocation>
    <text>Microtubule-associated.</text>
</comment>
<comment type="tissue specificity">
    <text>Cilia and flagella.</text>
</comment>
<comment type="similarity">
    <text evidence="2">Belongs to the tektin family.</text>
</comment>